<organism>
    <name type="scientific">Saccharum officinarum</name>
    <name type="common">Sugarcane</name>
    <dbReference type="NCBI Taxonomy" id="4547"/>
    <lineage>
        <taxon>Eukaryota</taxon>
        <taxon>Viridiplantae</taxon>
        <taxon>Streptophyta</taxon>
        <taxon>Embryophyta</taxon>
        <taxon>Tracheophyta</taxon>
        <taxon>Spermatophyta</taxon>
        <taxon>Magnoliopsida</taxon>
        <taxon>Liliopsida</taxon>
        <taxon>Poales</taxon>
        <taxon>Poaceae</taxon>
        <taxon>PACMAD clade</taxon>
        <taxon>Panicoideae</taxon>
        <taxon>Andropogonodae</taxon>
        <taxon>Andropogoneae</taxon>
        <taxon>Saccharinae</taxon>
        <taxon>Saccharum</taxon>
        <taxon>Saccharum officinarum species complex</taxon>
    </lineage>
</organism>
<evidence type="ECO:0000255" key="1">
    <source>
        <dbReference type="HAMAP-Rule" id="MF_01316"/>
    </source>
</evidence>
<sequence>MLTLKLFVYTVVIFFVSLFIFGFLSNDPGRNPGREE</sequence>
<feature type="chain" id="PRO_0000219652" description="Photosystem II reaction center protein I">
    <location>
        <begin position="1"/>
        <end position="36"/>
    </location>
</feature>
<feature type="transmembrane region" description="Helical" evidence="1">
    <location>
        <begin position="4"/>
        <end position="24"/>
    </location>
</feature>
<reference key="1">
    <citation type="journal article" date="2004" name="DNA Res.">
        <title>Complete nucleotide sequence of the sugarcane (Saccharum officinarum) chloroplast genome: a comparative analysis of four monocot chloroplast genomes.</title>
        <authorList>
            <person name="Asano T."/>
            <person name="Tsudzuki T."/>
            <person name="Takahashi S."/>
            <person name="Shimada H."/>
            <person name="Kadowaki K."/>
        </authorList>
    </citation>
    <scope>NUCLEOTIDE SEQUENCE [LARGE SCALE GENOMIC DNA]</scope>
</reference>
<protein>
    <recommendedName>
        <fullName evidence="1">Photosystem II reaction center protein I</fullName>
        <shortName evidence="1">PSII-I</shortName>
    </recommendedName>
    <alternativeName>
        <fullName evidence="1">PSII 4.8 kDa protein</fullName>
    </alternativeName>
</protein>
<comment type="function">
    <text evidence="1">One of the components of the core complex of photosystem II (PSII), required for its stability and/or assembly. PSII is a light-driven water:plastoquinone oxidoreductase that uses light energy to abstract electrons from H(2)O, generating O(2) and a proton gradient subsequently used for ATP formation. It consists of a core antenna complex that captures photons, and an electron transfer chain that converts photonic excitation into a charge separation.</text>
</comment>
<comment type="subunit">
    <text evidence="1">PSII is composed of 1 copy each of membrane proteins PsbA, PsbB, PsbC, PsbD, PsbE, PsbF, PsbH, PsbI, PsbJ, PsbK, PsbL, PsbM, PsbT, PsbX, PsbY, PsbZ, Psb30/Ycf12, at least 3 peripheral proteins of the oxygen-evolving complex and a large number of cofactors. It forms dimeric complexes.</text>
</comment>
<comment type="subcellular location">
    <subcellularLocation>
        <location evidence="1">Plastid</location>
        <location evidence="1">Chloroplast thylakoid membrane</location>
        <topology evidence="1">Single-pass membrane protein</topology>
    </subcellularLocation>
</comment>
<comment type="similarity">
    <text evidence="1">Belongs to the PsbI family.</text>
</comment>
<geneLocation type="chloroplast"/>
<keyword id="KW-0150">Chloroplast</keyword>
<keyword id="KW-0472">Membrane</keyword>
<keyword id="KW-0602">Photosynthesis</keyword>
<keyword id="KW-0604">Photosystem II</keyword>
<keyword id="KW-0934">Plastid</keyword>
<keyword id="KW-0674">Reaction center</keyword>
<keyword id="KW-0793">Thylakoid</keyword>
<keyword id="KW-0812">Transmembrane</keyword>
<keyword id="KW-1133">Transmembrane helix</keyword>
<dbReference type="EMBL" id="AP006714">
    <property type="protein sequence ID" value="BAD27274.1"/>
    <property type="molecule type" value="Genomic_DNA"/>
</dbReference>
<dbReference type="SMR" id="Q6ENY3"/>
<dbReference type="GO" id="GO:0009535">
    <property type="term" value="C:chloroplast thylakoid membrane"/>
    <property type="evidence" value="ECO:0007669"/>
    <property type="project" value="UniProtKB-SubCell"/>
</dbReference>
<dbReference type="GO" id="GO:0009539">
    <property type="term" value="C:photosystem II reaction center"/>
    <property type="evidence" value="ECO:0007669"/>
    <property type="project" value="InterPro"/>
</dbReference>
<dbReference type="GO" id="GO:0015979">
    <property type="term" value="P:photosynthesis"/>
    <property type="evidence" value="ECO:0007669"/>
    <property type="project" value="UniProtKB-UniRule"/>
</dbReference>
<dbReference type="HAMAP" id="MF_01316">
    <property type="entry name" value="PSII_PsbI"/>
    <property type="match status" value="1"/>
</dbReference>
<dbReference type="InterPro" id="IPR003686">
    <property type="entry name" value="PSII_PsbI"/>
</dbReference>
<dbReference type="InterPro" id="IPR037271">
    <property type="entry name" value="PSII_PsbI_sf"/>
</dbReference>
<dbReference type="NCBIfam" id="NF002735">
    <property type="entry name" value="PRK02655.1"/>
    <property type="match status" value="1"/>
</dbReference>
<dbReference type="PANTHER" id="PTHR35772">
    <property type="entry name" value="PHOTOSYSTEM II REACTION CENTER PROTEIN I"/>
    <property type="match status" value="1"/>
</dbReference>
<dbReference type="PANTHER" id="PTHR35772:SF1">
    <property type="entry name" value="PHOTOSYSTEM II REACTION CENTER PROTEIN I"/>
    <property type="match status" value="1"/>
</dbReference>
<dbReference type="Pfam" id="PF02532">
    <property type="entry name" value="PsbI"/>
    <property type="match status" value="1"/>
</dbReference>
<dbReference type="SUPFAM" id="SSF161041">
    <property type="entry name" value="Photosystem II reaction center protein I, PsbI"/>
    <property type="match status" value="1"/>
</dbReference>
<accession>Q6ENY3</accession>
<name>PSBI_SACOF</name>
<gene>
    <name evidence="1" type="primary">psbI</name>
</gene>
<proteinExistence type="inferred from homology"/>